<accession>Q0TH82</accession>
<sequence length="406" mass="43558">MSQPITRENFDEWMIPVYAPAPFIPVRGEGSRLWDQQGKEYIDFAGGIAVNALGHAHPELREALNEQASKFWHTGNGYTNEPVLRLAKKLIDATFADRVFFCNSGAEANEAALKLARKFAHDRYGSHKSGIVAFKNAFHGRTLFTVSAGGQPAYSQDFAPLPPDIRHAAYNDINSASALIDDATCAVIVEPIQGEGGVVPASNAFLQGLRELCDRHNALLIFDEVQTGVGRTGELYACMHYGVTPDLLTTAKALGGGFPVGALLATEECASVMTVGTHGTTYGGNPLASAVAGKVLDLINTPEMLNGVKQRHDWFVERLNSINHHYSLFSEVRGLGLLIGCVLNADYAGQAKQISQEAVKAGVMVLIAGGNVVRFAPALNVSEEEVTTGLDRFAAACEHFVSRGSS</sequence>
<proteinExistence type="inferred from homology"/>
<dbReference type="EC" id="2.6.1.81" evidence="1"/>
<dbReference type="EMBL" id="CP000247">
    <property type="protein sequence ID" value="ABG69697.1"/>
    <property type="molecule type" value="Genomic_DNA"/>
</dbReference>
<dbReference type="RefSeq" id="WP_000081990.1">
    <property type="nucleotide sequence ID" value="NC_008253.1"/>
</dbReference>
<dbReference type="SMR" id="Q0TH82"/>
<dbReference type="KEGG" id="ecp:ECP_1694"/>
<dbReference type="HOGENOM" id="CLU_016922_10_1_6"/>
<dbReference type="UniPathway" id="UPA00185">
    <property type="reaction ID" value="UER00281"/>
</dbReference>
<dbReference type="Proteomes" id="UP000009182">
    <property type="component" value="Chromosome"/>
</dbReference>
<dbReference type="GO" id="GO:0042802">
    <property type="term" value="F:identical protein binding"/>
    <property type="evidence" value="ECO:0007669"/>
    <property type="project" value="TreeGrafter"/>
</dbReference>
<dbReference type="GO" id="GO:0030170">
    <property type="term" value="F:pyridoxal phosphate binding"/>
    <property type="evidence" value="ECO:0007669"/>
    <property type="project" value="UniProtKB-UniRule"/>
</dbReference>
<dbReference type="GO" id="GO:0043825">
    <property type="term" value="F:succinylornithine transaminase activity"/>
    <property type="evidence" value="ECO:0007669"/>
    <property type="project" value="UniProtKB-EC"/>
</dbReference>
<dbReference type="GO" id="GO:1901607">
    <property type="term" value="P:alpha-amino acid biosynthetic process"/>
    <property type="evidence" value="ECO:0007669"/>
    <property type="project" value="UniProtKB-ARBA"/>
</dbReference>
<dbReference type="GO" id="GO:0019544">
    <property type="term" value="P:arginine catabolic process to glutamate"/>
    <property type="evidence" value="ECO:0007669"/>
    <property type="project" value="UniProtKB-UniRule"/>
</dbReference>
<dbReference type="GO" id="GO:0019545">
    <property type="term" value="P:arginine catabolic process to succinate"/>
    <property type="evidence" value="ECO:0007669"/>
    <property type="project" value="UniProtKB-UniRule"/>
</dbReference>
<dbReference type="GO" id="GO:0006593">
    <property type="term" value="P:ornithine catabolic process"/>
    <property type="evidence" value="ECO:0007669"/>
    <property type="project" value="InterPro"/>
</dbReference>
<dbReference type="CDD" id="cd00610">
    <property type="entry name" value="OAT_like"/>
    <property type="match status" value="1"/>
</dbReference>
<dbReference type="FunFam" id="3.40.640.10:FF:000004">
    <property type="entry name" value="Acetylornithine aminotransferase"/>
    <property type="match status" value="1"/>
</dbReference>
<dbReference type="FunFam" id="3.90.1150.10:FF:000009">
    <property type="entry name" value="Succinylornithine transaminase"/>
    <property type="match status" value="1"/>
</dbReference>
<dbReference type="Gene3D" id="3.90.1150.10">
    <property type="entry name" value="Aspartate Aminotransferase, domain 1"/>
    <property type="match status" value="1"/>
</dbReference>
<dbReference type="Gene3D" id="3.40.640.10">
    <property type="entry name" value="Type I PLP-dependent aspartate aminotransferase-like (Major domain)"/>
    <property type="match status" value="1"/>
</dbReference>
<dbReference type="HAMAP" id="MF_01107">
    <property type="entry name" value="ArgD_aminotrans_3"/>
    <property type="match status" value="1"/>
</dbReference>
<dbReference type="HAMAP" id="MF_01173">
    <property type="entry name" value="AstC_aminotrans_3"/>
    <property type="match status" value="1"/>
</dbReference>
<dbReference type="InterPro" id="IPR017652">
    <property type="entry name" value="Ac/SucOrn_transaminase_bac"/>
</dbReference>
<dbReference type="InterPro" id="IPR004636">
    <property type="entry name" value="AcOrn/SuccOrn_fam"/>
</dbReference>
<dbReference type="InterPro" id="IPR005814">
    <property type="entry name" value="Aminotrans_3"/>
</dbReference>
<dbReference type="InterPro" id="IPR049704">
    <property type="entry name" value="Aminotrans_3_PPA_site"/>
</dbReference>
<dbReference type="InterPro" id="IPR050103">
    <property type="entry name" value="Class-III_PLP-dep_AT"/>
</dbReference>
<dbReference type="InterPro" id="IPR015424">
    <property type="entry name" value="PyrdxlP-dep_Trfase"/>
</dbReference>
<dbReference type="InterPro" id="IPR015421">
    <property type="entry name" value="PyrdxlP-dep_Trfase_major"/>
</dbReference>
<dbReference type="InterPro" id="IPR015422">
    <property type="entry name" value="PyrdxlP-dep_Trfase_small"/>
</dbReference>
<dbReference type="InterPro" id="IPR026330">
    <property type="entry name" value="SOAT"/>
</dbReference>
<dbReference type="NCBIfam" id="TIGR03246">
    <property type="entry name" value="arg_catab_astC"/>
    <property type="match status" value="1"/>
</dbReference>
<dbReference type="NCBIfam" id="TIGR00707">
    <property type="entry name" value="argD"/>
    <property type="match status" value="1"/>
</dbReference>
<dbReference type="NCBIfam" id="NF002325">
    <property type="entry name" value="PRK01278.1"/>
    <property type="match status" value="1"/>
</dbReference>
<dbReference type="NCBIfam" id="NF003468">
    <property type="entry name" value="PRK05093.1"/>
    <property type="match status" value="1"/>
</dbReference>
<dbReference type="NCBIfam" id="NF009047">
    <property type="entry name" value="PRK12381.1"/>
    <property type="match status" value="1"/>
</dbReference>
<dbReference type="PANTHER" id="PTHR11986">
    <property type="entry name" value="AMINOTRANSFERASE CLASS III"/>
    <property type="match status" value="1"/>
</dbReference>
<dbReference type="PANTHER" id="PTHR11986:SF113">
    <property type="entry name" value="SUCCINYLORNITHINE TRANSAMINASE"/>
    <property type="match status" value="1"/>
</dbReference>
<dbReference type="Pfam" id="PF00202">
    <property type="entry name" value="Aminotran_3"/>
    <property type="match status" value="1"/>
</dbReference>
<dbReference type="PIRSF" id="PIRSF000521">
    <property type="entry name" value="Transaminase_4ab_Lys_Orn"/>
    <property type="match status" value="1"/>
</dbReference>
<dbReference type="SUPFAM" id="SSF53383">
    <property type="entry name" value="PLP-dependent transferases"/>
    <property type="match status" value="1"/>
</dbReference>
<dbReference type="PROSITE" id="PS00600">
    <property type="entry name" value="AA_TRANSFER_CLASS_3"/>
    <property type="match status" value="1"/>
</dbReference>
<name>ASTC_ECOL5</name>
<gene>
    <name evidence="1" type="primary">astC</name>
    <name evidence="1" type="synonym">argM</name>
    <name type="ordered locus">ECP_1694</name>
</gene>
<protein>
    <recommendedName>
        <fullName evidence="1">Succinylornithine transaminase</fullName>
        <shortName>SOAT</shortName>
        <ecNumber evidence="1">2.6.1.81</ecNumber>
    </recommendedName>
    <alternativeName>
        <fullName evidence="1">Succinylornithine aminotransferase</fullName>
    </alternativeName>
</protein>
<organism>
    <name type="scientific">Escherichia coli O6:K15:H31 (strain 536 / UPEC)</name>
    <dbReference type="NCBI Taxonomy" id="362663"/>
    <lineage>
        <taxon>Bacteria</taxon>
        <taxon>Pseudomonadati</taxon>
        <taxon>Pseudomonadota</taxon>
        <taxon>Gammaproteobacteria</taxon>
        <taxon>Enterobacterales</taxon>
        <taxon>Enterobacteriaceae</taxon>
        <taxon>Escherichia</taxon>
    </lineage>
</organism>
<evidence type="ECO:0000255" key="1">
    <source>
        <dbReference type="HAMAP-Rule" id="MF_01173"/>
    </source>
</evidence>
<reference key="1">
    <citation type="journal article" date="2006" name="Mol. Microbiol.">
        <title>Role of pathogenicity island-associated integrases in the genome plasticity of uropathogenic Escherichia coli strain 536.</title>
        <authorList>
            <person name="Hochhut B."/>
            <person name="Wilde C."/>
            <person name="Balling G."/>
            <person name="Middendorf B."/>
            <person name="Dobrindt U."/>
            <person name="Brzuszkiewicz E."/>
            <person name="Gottschalk G."/>
            <person name="Carniel E."/>
            <person name="Hacker J."/>
        </authorList>
    </citation>
    <scope>NUCLEOTIDE SEQUENCE [LARGE SCALE GENOMIC DNA]</scope>
    <source>
        <strain>536 / UPEC</strain>
    </source>
</reference>
<comment type="function">
    <text evidence="1">Catalyzes the transamination of N(2)-succinylornithine and alpha-ketoglutarate into N(2)-succinylglutamate semialdehyde and glutamate. Can also act as an acetylornithine aminotransferase.</text>
</comment>
<comment type="catalytic activity">
    <reaction evidence="1">
        <text>N(2)-succinyl-L-ornithine + 2-oxoglutarate = N-succinyl-L-glutamate 5-semialdehyde + L-glutamate</text>
        <dbReference type="Rhea" id="RHEA:16953"/>
        <dbReference type="ChEBI" id="CHEBI:16810"/>
        <dbReference type="ChEBI" id="CHEBI:29985"/>
        <dbReference type="ChEBI" id="CHEBI:58514"/>
        <dbReference type="ChEBI" id="CHEBI:58520"/>
        <dbReference type="EC" id="2.6.1.81"/>
    </reaction>
</comment>
<comment type="cofactor">
    <cofactor evidence="1">
        <name>pyridoxal 5'-phosphate</name>
        <dbReference type="ChEBI" id="CHEBI:597326"/>
    </cofactor>
</comment>
<comment type="pathway">
    <text evidence="1">Amino-acid degradation; L-arginine degradation via AST pathway; L-glutamate and succinate from L-arginine: step 3/5.</text>
</comment>
<comment type="similarity">
    <text evidence="1">Belongs to the class-III pyridoxal-phosphate-dependent aminotransferase family. AstC subfamily.</text>
</comment>
<feature type="chain" id="PRO_0000262440" description="Succinylornithine transaminase">
    <location>
        <begin position="1"/>
        <end position="406"/>
    </location>
</feature>
<feature type="modified residue" description="N6-(pyridoxal phosphate)lysine" evidence="1">
    <location>
        <position position="252"/>
    </location>
</feature>
<keyword id="KW-0032">Aminotransferase</keyword>
<keyword id="KW-0056">Arginine metabolism</keyword>
<keyword id="KW-0663">Pyridoxal phosphate</keyword>
<keyword id="KW-0808">Transferase</keyword>